<gene>
    <name type="primary">UCP2</name>
    <name type="synonym">SLC25A8</name>
</gene>
<protein>
    <recommendedName>
        <fullName evidence="1">Dicarboxylate carrier UCP2</fullName>
    </recommendedName>
    <alternativeName>
        <fullName>Mitochondrial uncoupling protein 2</fullName>
        <shortName>UCP 2</shortName>
    </alternativeName>
    <alternativeName>
        <fullName>Solute carrier family 25 member 8</fullName>
    </alternativeName>
</protein>
<keyword id="KW-0472">Membrane</keyword>
<keyword id="KW-0496">Mitochondrion</keyword>
<keyword id="KW-0999">Mitochondrion inner membrane</keyword>
<keyword id="KW-1185">Reference proteome</keyword>
<keyword id="KW-0677">Repeat</keyword>
<keyword id="KW-0812">Transmembrane</keyword>
<keyword id="KW-1133">Transmembrane helix</keyword>
<keyword id="KW-0813">Transport</keyword>
<proteinExistence type="evidence at transcript level"/>
<organism>
    <name type="scientific">Canis lupus familiaris</name>
    <name type="common">Dog</name>
    <name type="synonym">Canis familiaris</name>
    <dbReference type="NCBI Taxonomy" id="9615"/>
    <lineage>
        <taxon>Eukaryota</taxon>
        <taxon>Metazoa</taxon>
        <taxon>Chordata</taxon>
        <taxon>Craniata</taxon>
        <taxon>Vertebrata</taxon>
        <taxon>Euteleostomi</taxon>
        <taxon>Mammalia</taxon>
        <taxon>Eutheria</taxon>
        <taxon>Laurasiatheria</taxon>
        <taxon>Carnivora</taxon>
        <taxon>Caniformia</taxon>
        <taxon>Canidae</taxon>
        <taxon>Canis</taxon>
    </lineage>
</organism>
<sequence length="309" mass="33270">MVGFKATDVPPTATVKFLGAGTAACIADLITFPLDTAKVRLQIQGERQGPVRAAASAQYRGVLCTILTMVRTEGPRSLYSGLVAGLQRQMSFASVRIGLYDSVKQFYTKGSEHAGIGSRLLAGSTTGALAVAVAQPTDVVKVRFQAQARAGSGRRYQSTVDAYKTIAREEGFRGLWKGTSPNVARNAIVNCAELVTYDLIKDALLKANLMTDDLPCHFTSAFGAGFCTTVIASPVDVVKTRYMNSALGQYSSAGHCALTMLQKEGPRAFYKGFMPSFLRLGSWNVVMFVTYEQLKRALMAACTSREAPF</sequence>
<name>UCP2_CANLF</name>
<reference key="1">
    <citation type="journal article" date="2002" name="Comp. Biochem. Physiol.">
        <title>Canine mitochondrial uncoupling proteins: structure and mRNA expression of three isoforms in adult beagles.</title>
        <authorList>
            <person name="Ishioka K."/>
            <person name="Kanehira K."/>
            <person name="Sasaki N."/>
            <person name="Kitamura H."/>
            <person name="Kimura K."/>
            <person name="Saito M."/>
        </authorList>
    </citation>
    <scope>NUCLEOTIDE SEQUENCE [MRNA]</scope>
    <source>
        <strain>Beagle</strain>
    </source>
</reference>
<reference key="2">
    <citation type="submission" date="1999-11" db="EMBL/GenBank/DDBJ databases">
        <authorList>
            <person name="Thompson G.M."/>
            <person name="Kelly L.J."/>
            <person name="Candelore M.R."/>
        </authorList>
    </citation>
    <scope>NUCLEOTIDE SEQUENCE [MRNA] OF 4-197</scope>
</reference>
<feature type="chain" id="PRO_0000090663" description="Dicarboxylate carrier UCP2">
    <location>
        <begin position="1"/>
        <end position="309"/>
    </location>
</feature>
<feature type="topological domain" description="Mitochondrial intermembrane" evidence="5">
    <location>
        <begin position="1"/>
        <end position="16"/>
    </location>
</feature>
<feature type="transmembrane region" description="Helical; Name=1" evidence="2">
    <location>
        <begin position="17"/>
        <end position="40"/>
    </location>
</feature>
<feature type="topological domain" description="Mitochondrial matrix" evidence="5">
    <location>
        <begin position="41"/>
        <end position="77"/>
    </location>
</feature>
<feature type="transmembrane region" description="Helical; Name=2" evidence="2">
    <location>
        <begin position="78"/>
        <end position="103"/>
    </location>
</feature>
<feature type="topological domain" description="Mitochondrial intermembrane" evidence="5">
    <location>
        <begin position="104"/>
        <end position="119"/>
    </location>
</feature>
<feature type="transmembrane region" description="Helical; Name=3" evidence="2">
    <location>
        <begin position="120"/>
        <end position="145"/>
    </location>
</feature>
<feature type="topological domain" description="Mitochondrial matrix" evidence="5">
    <location>
        <begin position="146"/>
        <end position="173"/>
    </location>
</feature>
<feature type="transmembrane region" description="Helical; Name=4" evidence="2">
    <location>
        <begin position="174"/>
        <end position="199"/>
    </location>
</feature>
<feature type="topological domain" description="Mitochondrial intermembrane" evidence="5">
    <location>
        <begin position="200"/>
        <end position="217"/>
    </location>
</feature>
<feature type="transmembrane region" description="Helical; Name=5" evidence="2">
    <location>
        <begin position="218"/>
        <end position="242"/>
    </location>
</feature>
<feature type="topological domain" description="Mitochondrial matrix" evidence="5">
    <location>
        <begin position="243"/>
        <end position="268"/>
    </location>
</feature>
<feature type="transmembrane region" description="Helical; Name=6" evidence="2">
    <location>
        <begin position="269"/>
        <end position="294"/>
    </location>
</feature>
<feature type="topological domain" description="Mitochondrial intermembrane" evidence="5">
    <location>
        <begin position="295"/>
        <end position="309"/>
    </location>
</feature>
<feature type="repeat" description="Solcar 1" evidence="4">
    <location>
        <begin position="11"/>
        <end position="106"/>
    </location>
</feature>
<feature type="repeat" description="Solcar 2" evidence="4">
    <location>
        <begin position="114"/>
        <end position="203"/>
    </location>
</feature>
<feature type="repeat" description="Solcar 3" evidence="4">
    <location>
        <begin position="212"/>
        <end position="297"/>
    </location>
</feature>
<feature type="region of interest" description="Important for interaction with long-chain fatty acids" evidence="2">
    <location>
        <begin position="16"/>
        <end position="63"/>
    </location>
</feature>
<feature type="region of interest" description="Important for interaction with long-chain fatty acids" evidence="2">
    <location>
        <begin position="278"/>
        <end position="285"/>
    </location>
</feature>
<feature type="site" description="Important for inhibition by GDP" evidence="2">
    <location>
        <position position="141"/>
    </location>
</feature>
<feature type="site" description="Important for inhibition by GDP" evidence="2">
    <location>
        <position position="185"/>
    </location>
</feature>
<feature type="sequence conflict" description="In Ref. 2; AAF08309." evidence="5" ref="2">
    <original>C</original>
    <variation>G</variation>
    <location>
        <position position="64"/>
    </location>
</feature>
<evidence type="ECO:0000250" key="1">
    <source>
        <dbReference type="UniProtKB" id="P55851"/>
    </source>
</evidence>
<evidence type="ECO:0000250" key="2">
    <source>
        <dbReference type="UniProtKB" id="P70406"/>
    </source>
</evidence>
<evidence type="ECO:0000255" key="3"/>
<evidence type="ECO:0000255" key="4">
    <source>
        <dbReference type="PROSITE-ProRule" id="PRU00282"/>
    </source>
</evidence>
<evidence type="ECO:0000305" key="5"/>
<comment type="function">
    <text evidence="1 2">Antiporter that exports dicarboxylate intermediates of the Krebs cycle in exchange for phosphate plus a proton across the inner membrane of mitochondria, a process driven by mitochondrial motive force with an overall impact on glycolysis, glutaminolysis and glutathione-dependent redox balance. Continuous export of oxaloacetate and related four-carbon dicarboxylates from mitochondrial matrix into the cytosol negatively regulates the oxidation of acetyl-CoA substrates via the Krebs cycle lowering the ATP/ADP ratio and reactive oxygen species (ROS) production (By similarity). May mediate inducible proton entry into the mitochondrial matrix affecting ATP turnover as a protection mechanism against oxidative stress. The proton currents are most likely associated with fatty acid flipping across the inner membrane of mitochondria in a metabolic process regulated by free fatty acids and purine nucleotides (By similarity). Regulates the use of glucose as a source of energy. Required for glucose-induced DRP1-dependent mitochondrial fission and neuron activation in the ventromedial nucleus of the hypothalamus (VMH). This mitochondrial adaptation mechanism modulates the VMH pool of glucose-excited neurons with an impact on systemic glucose homeostasis. Regulates ROS levels and metabolic reprogramming of macrophages during the resolution phase of inflammation. Attenuates ROS production in response to IL33 to preserve the integrity of the Krebs cycle required for persistent production of itaconate and subsequent GATA3-dependent differentiation of inflammation-resolving alternatively activated macrophages (By similarity). Can unidirectionally transport anions including L-malate, L-aspartate, phosphate and chloride ions (By similarity). Does not mediate adaptive thermogenesis (By similarity).</text>
</comment>
<comment type="catalytic activity">
    <reaction evidence="1">
        <text>L-aspartate(out) + phosphate(in) + H(+)(in) = L-aspartate(in) + phosphate(out) + H(+)(out)</text>
        <dbReference type="Rhea" id="RHEA:73307"/>
        <dbReference type="ChEBI" id="CHEBI:15378"/>
        <dbReference type="ChEBI" id="CHEBI:29991"/>
        <dbReference type="ChEBI" id="CHEBI:43474"/>
    </reaction>
</comment>
<comment type="catalytic activity">
    <reaction evidence="1">
        <text>oxaloacetate(out) + phosphate(in) + H(+)(in) = oxaloacetate(in) + phosphate(out) + H(+)(out)</text>
        <dbReference type="Rhea" id="RHEA:73303"/>
        <dbReference type="ChEBI" id="CHEBI:15378"/>
        <dbReference type="ChEBI" id="CHEBI:16452"/>
        <dbReference type="ChEBI" id="CHEBI:43474"/>
    </reaction>
</comment>
<comment type="catalytic activity">
    <reaction evidence="1">
        <text>(S)-malate(out) + phosphate(in) + H(+)(in) = (S)-malate(in) + phosphate(out) + H(+)(out)</text>
        <dbReference type="Rhea" id="RHEA:73299"/>
        <dbReference type="ChEBI" id="CHEBI:15378"/>
        <dbReference type="ChEBI" id="CHEBI:15589"/>
        <dbReference type="ChEBI" id="CHEBI:43474"/>
    </reaction>
</comment>
<comment type="catalytic activity">
    <reaction evidence="1">
        <text>malonate(out) + phosphate(in) + H(+)(in) = malonate(in) + phosphate(out) + H(+)(out)</text>
        <dbReference type="Rhea" id="RHEA:73387"/>
        <dbReference type="ChEBI" id="CHEBI:15378"/>
        <dbReference type="ChEBI" id="CHEBI:15792"/>
        <dbReference type="ChEBI" id="CHEBI:43474"/>
    </reaction>
</comment>
<comment type="catalytic activity">
    <reaction evidence="1">
        <text>sulfate(out) + phosphate(in) + H(+)(in) = sulfate(in) + phosphate(out) + H(+)(out)</text>
        <dbReference type="Rhea" id="RHEA:73391"/>
        <dbReference type="ChEBI" id="CHEBI:15378"/>
        <dbReference type="ChEBI" id="CHEBI:16189"/>
        <dbReference type="ChEBI" id="CHEBI:43474"/>
    </reaction>
</comment>
<comment type="catalytic activity">
    <reaction evidence="1">
        <text>(S)-malate(out) = (S)-malate(in)</text>
        <dbReference type="Rhea" id="RHEA:74555"/>
        <dbReference type="ChEBI" id="CHEBI:15589"/>
    </reaction>
</comment>
<comment type="catalytic activity">
    <reaction evidence="1">
        <text>L-aspartate(out) = L-aspartate(in)</text>
        <dbReference type="Rhea" id="RHEA:66332"/>
        <dbReference type="ChEBI" id="CHEBI:29991"/>
    </reaction>
</comment>
<comment type="catalytic activity">
    <reaction evidence="1">
        <text>phosphate(in) = phosphate(out)</text>
        <dbReference type="Rhea" id="RHEA:32823"/>
        <dbReference type="ChEBI" id="CHEBI:43474"/>
    </reaction>
</comment>
<comment type="catalytic activity">
    <reaction evidence="1">
        <text>chloride(in) = chloride(out)</text>
        <dbReference type="Rhea" id="RHEA:29823"/>
        <dbReference type="ChEBI" id="CHEBI:17996"/>
    </reaction>
</comment>
<comment type="catalytic activity">
    <reaction evidence="1 2">
        <text>H(+)(in) = H(+)(out)</text>
        <dbReference type="Rhea" id="RHEA:34979"/>
        <dbReference type="ChEBI" id="CHEBI:15378"/>
    </reaction>
</comment>
<comment type="catalytic activity">
    <reaction evidence="2">
        <text>a long-chain fatty acid(out) = a long-chain fatty acid(in)</text>
        <dbReference type="Rhea" id="RHEA:39283"/>
        <dbReference type="ChEBI" id="CHEBI:57560"/>
    </reaction>
</comment>
<comment type="subunit">
    <text evidence="1">Homotetramer. Adopts an asymmetrical dimer of dimers functional form. Interacts with MICU1 (when methylated); leading to decrease the calcium sensitivity of MICU1.</text>
</comment>
<comment type="subcellular location">
    <subcellularLocation>
        <location evidence="2">Mitochondrion inner membrane</location>
        <topology evidence="3">Multi-pass membrane protein</topology>
    </subcellularLocation>
</comment>
<comment type="domain">
    <text evidence="2">The GDP-binding domain is located within the hydrophilic cavity, with GDP phosphates likely forming salt bridges with the charged residues, Lys-141 and Arg-185.</text>
</comment>
<comment type="domain">
    <text evidence="2">The long-chain fatty acid-binding domain consists of an hydrophobic groove between peripheral transmembrane helices 1 and 6 near the matrix side.</text>
</comment>
<comment type="similarity">
    <text evidence="5">Belongs to the mitochondrial carrier (TC 2.A.29) family.</text>
</comment>
<comment type="caution">
    <text evidence="1 2">The role of UCP2/SLC25A8 in mitochondrial proton conductance is a matter of debate. It was initially suggested that it mediates proton leak that increases net proton conductance in response to ROS such as reactive alkenals generated during fatty acid oxidation in mitochondria. By lowering the proton motive force, it would provide for feedback control of mitochondrial ROS metabolism limiting extensive ROS production and protecting cells against oxidative stress. This activity and its potential regulation by ubiquinones and nucleotides was disputed by later studies, which failed to reproduce the effect on proton conductance under physiological conditions. Rather than 'uncoupling' the link between electron transfer and ATP synthesis, it may couple metabolite transport to proton flux to allow for optimal ATP turnover.</text>
</comment>
<accession>Q9N2J1</accession>
<accession>Q9TTT0</accession>
<dbReference type="EMBL" id="AB020887">
    <property type="protein sequence ID" value="BAA90457.1"/>
    <property type="molecule type" value="mRNA"/>
</dbReference>
<dbReference type="EMBL" id="AF201377">
    <property type="protein sequence ID" value="AAF08309.1"/>
    <property type="molecule type" value="mRNA"/>
</dbReference>
<dbReference type="RefSeq" id="NP_001003048.1">
    <property type="nucleotide sequence ID" value="NM_001003048.1"/>
</dbReference>
<dbReference type="SMR" id="Q9N2J1"/>
<dbReference type="FunCoup" id="Q9N2J1">
    <property type="interactions" value="119"/>
</dbReference>
<dbReference type="STRING" id="9615.ENSCAFP00000008312"/>
<dbReference type="PaxDb" id="9612-ENSCAFP00000008312"/>
<dbReference type="GeneID" id="403576"/>
<dbReference type="KEGG" id="cfa:403576"/>
<dbReference type="CTD" id="7351"/>
<dbReference type="eggNOG" id="KOG0753">
    <property type="taxonomic scope" value="Eukaryota"/>
</dbReference>
<dbReference type="InParanoid" id="Q9N2J1"/>
<dbReference type="OrthoDB" id="448427at2759"/>
<dbReference type="Proteomes" id="UP000002254">
    <property type="component" value="Unplaced"/>
</dbReference>
<dbReference type="Proteomes" id="UP000694429">
    <property type="component" value="Unplaced"/>
</dbReference>
<dbReference type="Proteomes" id="UP000694542">
    <property type="component" value="Unplaced"/>
</dbReference>
<dbReference type="Proteomes" id="UP000805418">
    <property type="component" value="Unplaced"/>
</dbReference>
<dbReference type="GO" id="GO:0005743">
    <property type="term" value="C:mitochondrial inner membrane"/>
    <property type="evidence" value="ECO:0007669"/>
    <property type="project" value="UniProtKB-SubCell"/>
</dbReference>
<dbReference type="GO" id="GO:0015297">
    <property type="term" value="F:antiporter activity"/>
    <property type="evidence" value="ECO:0000250"/>
    <property type="project" value="UniProtKB"/>
</dbReference>
<dbReference type="GO" id="GO:0015183">
    <property type="term" value="F:L-aspartate transmembrane transporter activity"/>
    <property type="evidence" value="ECO:0000250"/>
    <property type="project" value="UniProtKB"/>
</dbReference>
<dbReference type="GO" id="GO:0015140">
    <property type="term" value="F:malate transmembrane transporter activity"/>
    <property type="evidence" value="ECO:0000250"/>
    <property type="project" value="UniProtKB"/>
</dbReference>
<dbReference type="GO" id="GO:0015131">
    <property type="term" value="F:oxaloacetate transmembrane transporter activity"/>
    <property type="evidence" value="ECO:0000250"/>
    <property type="project" value="UniProtKB"/>
</dbReference>
<dbReference type="GO" id="GO:0017077">
    <property type="term" value="F:oxidative phosphorylation uncoupler activity"/>
    <property type="evidence" value="ECO:0000318"/>
    <property type="project" value="GO_Central"/>
</dbReference>
<dbReference type="GO" id="GO:0140787">
    <property type="term" value="F:phosphate ion uniporter activity"/>
    <property type="evidence" value="ECO:0000250"/>
    <property type="project" value="UniProtKB"/>
</dbReference>
<dbReference type="GO" id="GO:0042803">
    <property type="term" value="F:protein homodimerization activity"/>
    <property type="evidence" value="ECO:0000250"/>
    <property type="project" value="UniProtKB"/>
</dbReference>
<dbReference type="GO" id="GO:0015078">
    <property type="term" value="F:proton transmembrane transporter activity"/>
    <property type="evidence" value="ECO:0000250"/>
    <property type="project" value="UniProtKB"/>
</dbReference>
<dbReference type="GO" id="GO:0008271">
    <property type="term" value="F:secondary active sulfate transmembrane transporter activity"/>
    <property type="evidence" value="ECO:0000250"/>
    <property type="project" value="UniProtKB"/>
</dbReference>
<dbReference type="GO" id="GO:1990845">
    <property type="term" value="P:adaptive thermogenesis"/>
    <property type="evidence" value="ECO:0000318"/>
    <property type="project" value="GO_Central"/>
</dbReference>
<dbReference type="GO" id="GO:0015740">
    <property type="term" value="P:C4-dicarboxylate transport"/>
    <property type="evidence" value="ECO:0000250"/>
    <property type="project" value="UniProtKB"/>
</dbReference>
<dbReference type="GO" id="GO:0071333">
    <property type="term" value="P:cellular response to glucose stimulus"/>
    <property type="evidence" value="ECO:0000250"/>
    <property type="project" value="UniProtKB"/>
</dbReference>
<dbReference type="GO" id="GO:0006541">
    <property type="term" value="P:glutamine metabolic process"/>
    <property type="evidence" value="ECO:0000250"/>
    <property type="project" value="UniProtKB"/>
</dbReference>
<dbReference type="GO" id="GO:0006096">
    <property type="term" value="P:glycolytic process"/>
    <property type="evidence" value="ECO:0000250"/>
    <property type="project" value="UniProtKB"/>
</dbReference>
<dbReference type="GO" id="GO:0030225">
    <property type="term" value="P:macrophage differentiation"/>
    <property type="evidence" value="ECO:0000250"/>
    <property type="project" value="UniProtKB"/>
</dbReference>
<dbReference type="GO" id="GO:0000266">
    <property type="term" value="P:mitochondrial fission"/>
    <property type="evidence" value="ECO:0000250"/>
    <property type="project" value="UniProtKB"/>
</dbReference>
<dbReference type="GO" id="GO:1990542">
    <property type="term" value="P:mitochondrial transmembrane transport"/>
    <property type="evidence" value="ECO:0000250"/>
    <property type="project" value="UniProtKB"/>
</dbReference>
<dbReference type="GO" id="GO:0072593">
    <property type="term" value="P:reactive oxygen species metabolic process"/>
    <property type="evidence" value="ECO:0000250"/>
    <property type="project" value="UniProtKB"/>
</dbReference>
<dbReference type="GO" id="GO:0009409">
    <property type="term" value="P:response to cold"/>
    <property type="evidence" value="ECO:0000318"/>
    <property type="project" value="GO_Central"/>
</dbReference>
<dbReference type="FunFam" id="1.50.40.10:FF:000008">
    <property type="entry name" value="Mitochondrial uncoupling protein 2"/>
    <property type="match status" value="1"/>
</dbReference>
<dbReference type="Gene3D" id="1.50.40.10">
    <property type="entry name" value="Mitochondrial carrier domain"/>
    <property type="match status" value="1"/>
</dbReference>
<dbReference type="InterPro" id="IPR002067">
    <property type="entry name" value="Mit_carrier"/>
</dbReference>
<dbReference type="InterPro" id="IPR050391">
    <property type="entry name" value="Mito_Metabolite_Transporter"/>
</dbReference>
<dbReference type="InterPro" id="IPR018108">
    <property type="entry name" value="Mitochondrial_sb/sol_carrier"/>
</dbReference>
<dbReference type="InterPro" id="IPR023395">
    <property type="entry name" value="Mt_carrier_dom_sf"/>
</dbReference>
<dbReference type="PANTHER" id="PTHR45618">
    <property type="entry name" value="MITOCHONDRIAL DICARBOXYLATE CARRIER-RELATED"/>
    <property type="match status" value="1"/>
</dbReference>
<dbReference type="Pfam" id="PF00153">
    <property type="entry name" value="Mito_carr"/>
    <property type="match status" value="3"/>
</dbReference>
<dbReference type="PRINTS" id="PR00784">
    <property type="entry name" value="MTUNCOUPLING"/>
</dbReference>
<dbReference type="SUPFAM" id="SSF103506">
    <property type="entry name" value="Mitochondrial carrier"/>
    <property type="match status" value="1"/>
</dbReference>
<dbReference type="PROSITE" id="PS50920">
    <property type="entry name" value="SOLCAR"/>
    <property type="match status" value="3"/>
</dbReference>